<dbReference type="EC" id="3.6.4.-" evidence="1"/>
<dbReference type="EMBL" id="CP000090">
    <property type="protein sequence ID" value="AAZ59865.1"/>
    <property type="molecule type" value="Genomic_DNA"/>
</dbReference>
<dbReference type="SMR" id="Q475R8"/>
<dbReference type="STRING" id="264198.Reut_A0483"/>
<dbReference type="KEGG" id="reu:Reut_A0483"/>
<dbReference type="eggNOG" id="COG2255">
    <property type="taxonomic scope" value="Bacteria"/>
</dbReference>
<dbReference type="HOGENOM" id="CLU_055599_1_0_4"/>
<dbReference type="OrthoDB" id="9804478at2"/>
<dbReference type="GO" id="GO:0005737">
    <property type="term" value="C:cytoplasm"/>
    <property type="evidence" value="ECO:0007669"/>
    <property type="project" value="UniProtKB-SubCell"/>
</dbReference>
<dbReference type="GO" id="GO:0048476">
    <property type="term" value="C:Holliday junction resolvase complex"/>
    <property type="evidence" value="ECO:0007669"/>
    <property type="project" value="UniProtKB-UniRule"/>
</dbReference>
<dbReference type="GO" id="GO:0005524">
    <property type="term" value="F:ATP binding"/>
    <property type="evidence" value="ECO:0007669"/>
    <property type="project" value="UniProtKB-UniRule"/>
</dbReference>
<dbReference type="GO" id="GO:0016887">
    <property type="term" value="F:ATP hydrolysis activity"/>
    <property type="evidence" value="ECO:0007669"/>
    <property type="project" value="InterPro"/>
</dbReference>
<dbReference type="GO" id="GO:0000400">
    <property type="term" value="F:four-way junction DNA binding"/>
    <property type="evidence" value="ECO:0007669"/>
    <property type="project" value="UniProtKB-UniRule"/>
</dbReference>
<dbReference type="GO" id="GO:0009378">
    <property type="term" value="F:four-way junction helicase activity"/>
    <property type="evidence" value="ECO:0007669"/>
    <property type="project" value="InterPro"/>
</dbReference>
<dbReference type="GO" id="GO:0006310">
    <property type="term" value="P:DNA recombination"/>
    <property type="evidence" value="ECO:0007669"/>
    <property type="project" value="UniProtKB-UniRule"/>
</dbReference>
<dbReference type="GO" id="GO:0006281">
    <property type="term" value="P:DNA repair"/>
    <property type="evidence" value="ECO:0007669"/>
    <property type="project" value="UniProtKB-UniRule"/>
</dbReference>
<dbReference type="CDD" id="cd00009">
    <property type="entry name" value="AAA"/>
    <property type="match status" value="1"/>
</dbReference>
<dbReference type="FunFam" id="1.10.10.10:FF:000086">
    <property type="entry name" value="Holliday junction ATP-dependent DNA helicase RuvB"/>
    <property type="match status" value="1"/>
</dbReference>
<dbReference type="FunFam" id="1.10.8.60:FF:000023">
    <property type="entry name" value="Holliday junction ATP-dependent DNA helicase RuvB"/>
    <property type="match status" value="1"/>
</dbReference>
<dbReference type="FunFam" id="3.40.50.300:FF:000073">
    <property type="entry name" value="Holliday junction ATP-dependent DNA helicase RuvB"/>
    <property type="match status" value="1"/>
</dbReference>
<dbReference type="Gene3D" id="1.10.8.60">
    <property type="match status" value="1"/>
</dbReference>
<dbReference type="Gene3D" id="3.40.50.300">
    <property type="entry name" value="P-loop containing nucleotide triphosphate hydrolases"/>
    <property type="match status" value="1"/>
</dbReference>
<dbReference type="Gene3D" id="1.10.10.10">
    <property type="entry name" value="Winged helix-like DNA-binding domain superfamily/Winged helix DNA-binding domain"/>
    <property type="match status" value="1"/>
</dbReference>
<dbReference type="HAMAP" id="MF_00016">
    <property type="entry name" value="DNA_HJ_migration_RuvB"/>
    <property type="match status" value="1"/>
</dbReference>
<dbReference type="InterPro" id="IPR003593">
    <property type="entry name" value="AAA+_ATPase"/>
</dbReference>
<dbReference type="InterPro" id="IPR041445">
    <property type="entry name" value="AAA_lid_4"/>
</dbReference>
<dbReference type="InterPro" id="IPR004605">
    <property type="entry name" value="DNA_helicase_Holl-junc_RuvB"/>
</dbReference>
<dbReference type="InterPro" id="IPR027417">
    <property type="entry name" value="P-loop_NTPase"/>
</dbReference>
<dbReference type="InterPro" id="IPR008824">
    <property type="entry name" value="RuvB-like_N"/>
</dbReference>
<dbReference type="InterPro" id="IPR008823">
    <property type="entry name" value="RuvB_C"/>
</dbReference>
<dbReference type="InterPro" id="IPR036388">
    <property type="entry name" value="WH-like_DNA-bd_sf"/>
</dbReference>
<dbReference type="InterPro" id="IPR036390">
    <property type="entry name" value="WH_DNA-bd_sf"/>
</dbReference>
<dbReference type="NCBIfam" id="NF000868">
    <property type="entry name" value="PRK00080.1"/>
    <property type="match status" value="1"/>
</dbReference>
<dbReference type="NCBIfam" id="TIGR00635">
    <property type="entry name" value="ruvB"/>
    <property type="match status" value="1"/>
</dbReference>
<dbReference type="PANTHER" id="PTHR42848">
    <property type="match status" value="1"/>
</dbReference>
<dbReference type="PANTHER" id="PTHR42848:SF1">
    <property type="entry name" value="HOLLIDAY JUNCTION BRANCH MIGRATION COMPLEX SUBUNIT RUVB"/>
    <property type="match status" value="1"/>
</dbReference>
<dbReference type="Pfam" id="PF17864">
    <property type="entry name" value="AAA_lid_4"/>
    <property type="match status" value="1"/>
</dbReference>
<dbReference type="Pfam" id="PF05491">
    <property type="entry name" value="RuvB_C"/>
    <property type="match status" value="1"/>
</dbReference>
<dbReference type="Pfam" id="PF05496">
    <property type="entry name" value="RuvB_N"/>
    <property type="match status" value="1"/>
</dbReference>
<dbReference type="SMART" id="SM00382">
    <property type="entry name" value="AAA"/>
    <property type="match status" value="1"/>
</dbReference>
<dbReference type="SUPFAM" id="SSF52540">
    <property type="entry name" value="P-loop containing nucleoside triphosphate hydrolases"/>
    <property type="match status" value="1"/>
</dbReference>
<dbReference type="SUPFAM" id="SSF46785">
    <property type="entry name" value="Winged helix' DNA-binding domain"/>
    <property type="match status" value="1"/>
</dbReference>
<sequence length="352" mass="38672">MIETDKFSAPDRVISATPASSREEAFERALRPKLLDEYVGQEKVRGQLDIFMHAARNRREALDHVLLFGPPGLGKTTLAHIIAREMGVNLRQTSGPVLERPGDLAALLTNLEANDVLFIDEIHRLSPVVEEILYPALEDYQIDIMIGEGPAARSVKLDLQPFTLVGATTRAGMLTNPLRDRFGIVARLEFYTAEELARIVTRSAQLLGAHIDPLGSLEIARRARGTPRIANRLLRRVRDYAEVKGDGTITREIADAALAMLDVDRVGFDLMDRKLLEAVLHKFGGGPVGVDNLAAAIGEERDTIEDVLEPYLIQQGYLQRTPRGRVATAAAYRHFGLASPQAGDSGDLIDGE</sequence>
<protein>
    <recommendedName>
        <fullName evidence="1">Holliday junction branch migration complex subunit RuvB</fullName>
        <ecNumber evidence="1">3.6.4.-</ecNumber>
    </recommendedName>
</protein>
<keyword id="KW-0067">ATP-binding</keyword>
<keyword id="KW-0963">Cytoplasm</keyword>
<keyword id="KW-0227">DNA damage</keyword>
<keyword id="KW-0233">DNA recombination</keyword>
<keyword id="KW-0234">DNA repair</keyword>
<keyword id="KW-0238">DNA-binding</keyword>
<keyword id="KW-0378">Hydrolase</keyword>
<keyword id="KW-0547">Nucleotide-binding</keyword>
<name>RUVB_CUPPJ</name>
<gene>
    <name evidence="1" type="primary">ruvB</name>
    <name type="ordered locus">Reut_A0483</name>
</gene>
<evidence type="ECO:0000255" key="1">
    <source>
        <dbReference type="HAMAP-Rule" id="MF_00016"/>
    </source>
</evidence>
<reference key="1">
    <citation type="journal article" date="2010" name="PLoS ONE">
        <title>The complete multipartite genome sequence of Cupriavidus necator JMP134, a versatile pollutant degrader.</title>
        <authorList>
            <person name="Lykidis A."/>
            <person name="Perez-Pantoja D."/>
            <person name="Ledger T."/>
            <person name="Mavromatis K."/>
            <person name="Anderson I.J."/>
            <person name="Ivanova N.N."/>
            <person name="Hooper S.D."/>
            <person name="Lapidus A."/>
            <person name="Lucas S."/>
            <person name="Gonzalez B."/>
            <person name="Kyrpides N.C."/>
        </authorList>
    </citation>
    <scope>NUCLEOTIDE SEQUENCE [LARGE SCALE GENOMIC DNA]</scope>
    <source>
        <strain>JMP134 / LMG 1197</strain>
    </source>
</reference>
<accession>Q475R8</accession>
<comment type="function">
    <text evidence="1">The RuvA-RuvB-RuvC complex processes Holliday junction (HJ) DNA during genetic recombination and DNA repair, while the RuvA-RuvB complex plays an important role in the rescue of blocked DNA replication forks via replication fork reversal (RFR). RuvA specifically binds to HJ cruciform DNA, conferring on it an open structure. The RuvB hexamer acts as an ATP-dependent pump, pulling dsDNA into and through the RuvAB complex. RuvB forms 2 homohexamers on either side of HJ DNA bound by 1 or 2 RuvA tetramers; 4 subunits per hexamer contact DNA at a time. Coordinated motions by a converter formed by DNA-disengaged RuvB subunits stimulates ATP hydrolysis and nucleotide exchange. Immobilization of the converter enables RuvB to convert the ATP-contained energy into a lever motion, pulling 2 nucleotides of DNA out of the RuvA tetramer per ATP hydrolyzed, thus driving DNA branch migration. The RuvB motors rotate together with the DNA substrate, which together with the progressing nucleotide cycle form the mechanistic basis for DNA recombination by continuous HJ branch migration. Branch migration allows RuvC to scan DNA until it finds its consensus sequence, where it cleaves and resolves cruciform DNA.</text>
</comment>
<comment type="catalytic activity">
    <reaction evidence="1">
        <text>ATP + H2O = ADP + phosphate + H(+)</text>
        <dbReference type="Rhea" id="RHEA:13065"/>
        <dbReference type="ChEBI" id="CHEBI:15377"/>
        <dbReference type="ChEBI" id="CHEBI:15378"/>
        <dbReference type="ChEBI" id="CHEBI:30616"/>
        <dbReference type="ChEBI" id="CHEBI:43474"/>
        <dbReference type="ChEBI" id="CHEBI:456216"/>
    </reaction>
</comment>
<comment type="subunit">
    <text evidence="1">Homohexamer. Forms an RuvA(8)-RuvB(12)-Holliday junction (HJ) complex. HJ DNA is sandwiched between 2 RuvA tetramers; dsDNA enters through RuvA and exits via RuvB. An RuvB hexamer assembles on each DNA strand where it exits the tetramer. Each RuvB hexamer is contacted by two RuvA subunits (via domain III) on 2 adjacent RuvB subunits; this complex drives branch migration. In the full resolvosome a probable DNA-RuvA(4)-RuvB(12)-RuvC(2) complex forms which resolves the HJ.</text>
</comment>
<comment type="subcellular location">
    <subcellularLocation>
        <location evidence="1">Cytoplasm</location>
    </subcellularLocation>
</comment>
<comment type="domain">
    <text evidence="1">Has 3 domains, the large (RuvB-L) and small ATPase (RuvB-S) domains and the C-terminal head (RuvB-H) domain. The head domain binds DNA, while the ATPase domains jointly bind ATP, ADP or are empty depending on the state of the subunit in the translocation cycle. During a single DNA translocation step the structure of each domain remains the same, but their relative positions change.</text>
</comment>
<comment type="similarity">
    <text evidence="1">Belongs to the RuvB family.</text>
</comment>
<feature type="chain" id="PRO_0000235396" description="Holliday junction branch migration complex subunit RuvB">
    <location>
        <begin position="1"/>
        <end position="352"/>
    </location>
</feature>
<feature type="region of interest" description="Large ATPase domain (RuvB-L)" evidence="1">
    <location>
        <begin position="4"/>
        <end position="191"/>
    </location>
</feature>
<feature type="region of interest" description="Small ATPAse domain (RuvB-S)" evidence="1">
    <location>
        <begin position="192"/>
        <end position="262"/>
    </location>
</feature>
<feature type="region of interest" description="Head domain (RuvB-H)" evidence="1">
    <location>
        <begin position="265"/>
        <end position="352"/>
    </location>
</feature>
<feature type="binding site" evidence="1">
    <location>
        <position position="30"/>
    </location>
    <ligand>
        <name>ATP</name>
        <dbReference type="ChEBI" id="CHEBI:30616"/>
    </ligand>
</feature>
<feature type="binding site" evidence="1">
    <location>
        <position position="31"/>
    </location>
    <ligand>
        <name>ATP</name>
        <dbReference type="ChEBI" id="CHEBI:30616"/>
    </ligand>
</feature>
<feature type="binding site" evidence="1">
    <location>
        <position position="72"/>
    </location>
    <ligand>
        <name>ATP</name>
        <dbReference type="ChEBI" id="CHEBI:30616"/>
    </ligand>
</feature>
<feature type="binding site" evidence="1">
    <location>
        <position position="75"/>
    </location>
    <ligand>
        <name>ATP</name>
        <dbReference type="ChEBI" id="CHEBI:30616"/>
    </ligand>
</feature>
<feature type="binding site" evidence="1">
    <location>
        <position position="76"/>
    </location>
    <ligand>
        <name>ATP</name>
        <dbReference type="ChEBI" id="CHEBI:30616"/>
    </ligand>
</feature>
<feature type="binding site" evidence="1">
    <location>
        <position position="76"/>
    </location>
    <ligand>
        <name>Mg(2+)</name>
        <dbReference type="ChEBI" id="CHEBI:18420"/>
    </ligand>
</feature>
<feature type="binding site" evidence="1">
    <location>
        <position position="77"/>
    </location>
    <ligand>
        <name>ATP</name>
        <dbReference type="ChEBI" id="CHEBI:30616"/>
    </ligand>
</feature>
<feature type="binding site" evidence="1">
    <location>
        <begin position="138"/>
        <end position="140"/>
    </location>
    <ligand>
        <name>ATP</name>
        <dbReference type="ChEBI" id="CHEBI:30616"/>
    </ligand>
</feature>
<feature type="binding site" evidence="1">
    <location>
        <position position="181"/>
    </location>
    <ligand>
        <name>ATP</name>
        <dbReference type="ChEBI" id="CHEBI:30616"/>
    </ligand>
</feature>
<feature type="binding site" evidence="1">
    <location>
        <position position="191"/>
    </location>
    <ligand>
        <name>ATP</name>
        <dbReference type="ChEBI" id="CHEBI:30616"/>
    </ligand>
</feature>
<feature type="binding site" evidence="1">
    <location>
        <position position="228"/>
    </location>
    <ligand>
        <name>ATP</name>
        <dbReference type="ChEBI" id="CHEBI:30616"/>
    </ligand>
</feature>
<feature type="binding site" evidence="1">
    <location>
        <position position="301"/>
    </location>
    <ligand>
        <name>DNA</name>
        <dbReference type="ChEBI" id="CHEBI:16991"/>
    </ligand>
</feature>
<feature type="binding site" evidence="1">
    <location>
        <position position="320"/>
    </location>
    <ligand>
        <name>DNA</name>
        <dbReference type="ChEBI" id="CHEBI:16991"/>
    </ligand>
</feature>
<feature type="binding site" evidence="1">
    <location>
        <position position="325"/>
    </location>
    <ligand>
        <name>DNA</name>
        <dbReference type="ChEBI" id="CHEBI:16991"/>
    </ligand>
</feature>
<proteinExistence type="inferred from homology"/>
<organism>
    <name type="scientific">Cupriavidus pinatubonensis (strain JMP 134 / LMG 1197)</name>
    <name type="common">Cupriavidus necator (strain JMP 134)</name>
    <dbReference type="NCBI Taxonomy" id="264198"/>
    <lineage>
        <taxon>Bacteria</taxon>
        <taxon>Pseudomonadati</taxon>
        <taxon>Pseudomonadota</taxon>
        <taxon>Betaproteobacteria</taxon>
        <taxon>Burkholderiales</taxon>
        <taxon>Burkholderiaceae</taxon>
        <taxon>Cupriavidus</taxon>
    </lineage>
</organism>